<feature type="chain" id="PRO_0000074473" description="Defensin">
    <location>
        <begin position="1"/>
        <end position="43"/>
    </location>
</feature>
<feature type="disulfide bond" evidence="1">
    <location>
        <begin position="3"/>
        <end position="34"/>
    </location>
</feature>
<feature type="disulfide bond" evidence="1">
    <location>
        <begin position="20"/>
        <end position="39"/>
    </location>
</feature>
<feature type="disulfide bond" evidence="1">
    <location>
        <begin position="24"/>
        <end position="41"/>
    </location>
</feature>
<sequence length="43" mass="4648">ATCDALSFSSKWLTVNHSACAIHCLTKGYKGGRCVNTICNCRN</sequence>
<accession>P80407</accession>
<organism>
    <name type="scientific">Palomena prasina</name>
    <name type="common">Green shield bug</name>
    <name type="synonym">Cimex prasinus</name>
    <dbReference type="NCBI Taxonomy" id="55431"/>
    <lineage>
        <taxon>Eukaryota</taxon>
        <taxon>Metazoa</taxon>
        <taxon>Ecdysozoa</taxon>
        <taxon>Arthropoda</taxon>
        <taxon>Hexapoda</taxon>
        <taxon>Insecta</taxon>
        <taxon>Pterygota</taxon>
        <taxon>Neoptera</taxon>
        <taxon>Paraneoptera</taxon>
        <taxon>Hemiptera</taxon>
        <taxon>Heteroptera</taxon>
        <taxon>Panheteroptera</taxon>
        <taxon>Pentatomomorpha</taxon>
        <taxon>Pentatomoidea</taxon>
        <taxon>Pentatomidae</taxon>
        <taxon>Pentatominae</taxon>
        <taxon>Palomena</taxon>
    </lineage>
</organism>
<proteinExistence type="evidence at protein level"/>
<evidence type="ECO:0000255" key="1">
    <source>
        <dbReference type="PROSITE-ProRule" id="PRU00710"/>
    </source>
</evidence>
<evidence type="ECO:0000269" key="2">
    <source ref="1"/>
</evidence>
<reference key="1">
    <citation type="journal article" date="1996" name="J. Insect Physiol.">
        <title>The inducible antibacterial peptides of the hemipteran insect Palomena prasina: identification of a unique family of proline-rich peptides and of a novel insect defensin.</title>
        <authorList>
            <person name="Chernysh S."/>
            <person name="Cociancich S."/>
            <person name="Briand J.-P."/>
            <person name="Hetru C."/>
            <person name="Bulet P."/>
        </authorList>
    </citation>
    <scope>PROTEIN SEQUENCE</scope>
    <scope>MASS SPECTROMETRY</scope>
    <source>
        <tissue>Hemolymph</tissue>
        <tissue>Larval hemolymph</tissue>
    </source>
</reference>
<dbReference type="SMR" id="P80407"/>
<dbReference type="GO" id="GO:0005576">
    <property type="term" value="C:extracellular region"/>
    <property type="evidence" value="ECO:0000314"/>
    <property type="project" value="UniProtKB"/>
</dbReference>
<dbReference type="GO" id="GO:0050829">
    <property type="term" value="P:defense response to Gram-negative bacterium"/>
    <property type="evidence" value="ECO:0000270"/>
    <property type="project" value="UniProtKB"/>
</dbReference>
<dbReference type="GO" id="GO:0045087">
    <property type="term" value="P:innate immune response"/>
    <property type="evidence" value="ECO:0007669"/>
    <property type="project" value="UniProtKB-KW"/>
</dbReference>
<dbReference type="FunFam" id="3.30.30.10:FF:000005">
    <property type="entry name" value="Defensin"/>
    <property type="match status" value="1"/>
</dbReference>
<dbReference type="Gene3D" id="3.30.30.10">
    <property type="entry name" value="Knottin, scorpion toxin-like"/>
    <property type="match status" value="1"/>
</dbReference>
<dbReference type="InterPro" id="IPR001542">
    <property type="entry name" value="Defensin_invertebrate/fungal"/>
</dbReference>
<dbReference type="InterPro" id="IPR003614">
    <property type="entry name" value="Scorpion_toxin-like"/>
</dbReference>
<dbReference type="InterPro" id="IPR036574">
    <property type="entry name" value="Scorpion_toxin-like_sf"/>
</dbReference>
<dbReference type="Pfam" id="PF01097">
    <property type="entry name" value="Defensin_2"/>
    <property type="match status" value="1"/>
</dbReference>
<dbReference type="SMART" id="SM00505">
    <property type="entry name" value="Knot1"/>
    <property type="match status" value="1"/>
</dbReference>
<dbReference type="SUPFAM" id="SSF57095">
    <property type="entry name" value="Scorpion toxin-like"/>
    <property type="match status" value="1"/>
</dbReference>
<dbReference type="PROSITE" id="PS51378">
    <property type="entry name" value="INVERT_DEFENSINS"/>
    <property type="match status" value="1"/>
</dbReference>
<keyword id="KW-0044">Antibiotic</keyword>
<keyword id="KW-0929">Antimicrobial</keyword>
<keyword id="KW-0211">Defensin</keyword>
<keyword id="KW-0903">Direct protein sequencing</keyword>
<keyword id="KW-1015">Disulfide bond</keyword>
<keyword id="KW-0391">Immunity</keyword>
<keyword id="KW-0399">Innate immunity</keyword>
<keyword id="KW-0964">Secreted</keyword>
<name>DEFI_PALPR</name>
<comment type="function">
    <text>Antibacterial peptide active against Gram-positive and Gram-negative bacteria.</text>
</comment>
<comment type="subcellular location">
    <subcellularLocation>
        <location>Secreted</location>
    </subcellularLocation>
</comment>
<comment type="induction">
    <text>By bacterial infection.</text>
</comment>
<comment type="mass spectrometry" mass="4614.2" error="0.3" method="Electrospray" evidence="2"/>
<comment type="similarity">
    <text evidence="1">Belongs to the invertebrate defensin family. Type 1 subfamily.</text>
</comment>
<protein>
    <recommendedName>
        <fullName>Defensin</fullName>
    </recommendedName>
</protein>